<accession>Q812I1</accession>
<feature type="chain" id="PRO_0000372729" description="UPF0741 protein BC_5384">
    <location>
        <begin position="1"/>
        <end position="74"/>
    </location>
</feature>
<keyword id="KW-1185">Reference proteome</keyword>
<sequence>MGNEFRVCDDCQATNIKTLVPKLKKVDSCATIEVGCQSYCGPGRKKSFAFVNNRPVAAPTEDELIVKIEAKLNK</sequence>
<organism>
    <name type="scientific">Bacillus cereus (strain ATCC 14579 / DSM 31 / CCUG 7414 / JCM 2152 / NBRC 15305 / NCIMB 9373 / NCTC 2599 / NRRL B-3711)</name>
    <dbReference type="NCBI Taxonomy" id="226900"/>
    <lineage>
        <taxon>Bacteria</taxon>
        <taxon>Bacillati</taxon>
        <taxon>Bacillota</taxon>
        <taxon>Bacilli</taxon>
        <taxon>Bacillales</taxon>
        <taxon>Bacillaceae</taxon>
        <taxon>Bacillus</taxon>
        <taxon>Bacillus cereus group</taxon>
    </lineage>
</organism>
<dbReference type="EMBL" id="AE016877">
    <property type="protein sequence ID" value="AAP12246.1"/>
    <property type="molecule type" value="Genomic_DNA"/>
</dbReference>
<dbReference type="RefSeq" id="NP_835045.1">
    <property type="nucleotide sequence ID" value="NC_004722.1"/>
</dbReference>
<dbReference type="RefSeq" id="WP_000526071.1">
    <property type="nucleotide sequence ID" value="NZ_CP138336.1"/>
</dbReference>
<dbReference type="SMR" id="Q812I1"/>
<dbReference type="STRING" id="226900.BC_5384"/>
<dbReference type="KEGG" id="bce:BC5384"/>
<dbReference type="PATRIC" id="fig|226900.8.peg.5561"/>
<dbReference type="HOGENOM" id="CLU_163820_1_0_9"/>
<dbReference type="OrthoDB" id="1645211at2"/>
<dbReference type="Proteomes" id="UP000001417">
    <property type="component" value="Chromosome"/>
</dbReference>
<dbReference type="HAMAP" id="MF_01863">
    <property type="entry name" value="UPF0741"/>
    <property type="match status" value="1"/>
</dbReference>
<dbReference type="InterPro" id="IPR009910">
    <property type="entry name" value="DUF1450"/>
</dbReference>
<dbReference type="InterPro" id="IPR020880">
    <property type="entry name" value="UPF0741"/>
</dbReference>
<dbReference type="Pfam" id="PF07293">
    <property type="entry name" value="DUF1450"/>
    <property type="match status" value="1"/>
</dbReference>
<protein>
    <recommendedName>
        <fullName evidence="1">UPF0741 protein BC_5384</fullName>
    </recommendedName>
</protein>
<proteinExistence type="inferred from homology"/>
<name>Y5384_BACCR</name>
<evidence type="ECO:0000255" key="1">
    <source>
        <dbReference type="HAMAP-Rule" id="MF_01863"/>
    </source>
</evidence>
<reference key="1">
    <citation type="journal article" date="2003" name="Nature">
        <title>Genome sequence of Bacillus cereus and comparative analysis with Bacillus anthracis.</title>
        <authorList>
            <person name="Ivanova N."/>
            <person name="Sorokin A."/>
            <person name="Anderson I."/>
            <person name="Galleron N."/>
            <person name="Candelon B."/>
            <person name="Kapatral V."/>
            <person name="Bhattacharyya A."/>
            <person name="Reznik G."/>
            <person name="Mikhailova N."/>
            <person name="Lapidus A."/>
            <person name="Chu L."/>
            <person name="Mazur M."/>
            <person name="Goltsman E."/>
            <person name="Larsen N."/>
            <person name="D'Souza M."/>
            <person name="Walunas T."/>
            <person name="Grechkin Y."/>
            <person name="Pusch G."/>
            <person name="Haselkorn R."/>
            <person name="Fonstein M."/>
            <person name="Ehrlich S.D."/>
            <person name="Overbeek R."/>
            <person name="Kyrpides N.C."/>
        </authorList>
    </citation>
    <scope>NUCLEOTIDE SEQUENCE [LARGE SCALE GENOMIC DNA]</scope>
    <source>
        <strain>ATCC 14579 / DSM 31 / CCUG 7414 / JCM 2152 / NBRC 15305 / NCIMB 9373 / NCTC 2599 / NRRL B-3711</strain>
    </source>
</reference>
<gene>
    <name type="ordered locus">BC_5384</name>
</gene>
<comment type="similarity">
    <text evidence="1">Belongs to the UPF0741 family.</text>
</comment>